<comment type="function">
    <text evidence="1">With S4 and S12 plays an important role in translational accuracy.</text>
</comment>
<comment type="function">
    <text evidence="1">Located at the back of the 30S subunit body where it stabilizes the conformation of the head with respect to the body.</text>
</comment>
<comment type="subunit">
    <text evidence="1">Part of the 30S ribosomal subunit. Contacts proteins S4 and S8.</text>
</comment>
<comment type="domain">
    <text>The N-terminal domain interacts with the head of the 30S subunit; the C-terminal domain interacts with the body and contacts protein S4. The interaction surface between S4 and S5 is involved in control of translational fidelity.</text>
</comment>
<comment type="similarity">
    <text evidence="1">Belongs to the universal ribosomal protein uS5 family.</text>
</comment>
<protein>
    <recommendedName>
        <fullName evidence="1">Small ribosomal subunit protein uS5</fullName>
    </recommendedName>
    <alternativeName>
        <fullName evidence="3">30S ribosomal protein S5</fullName>
    </alternativeName>
</protein>
<sequence>MADETNLEGVAAVEATGGEPQREGRGRGRGRGGNDRGGERGGRGRRDDRRGRGNNDEEGGEELIEKLVHINRVSKTVKGGKRFGFAALVVVGDGKGRAGFGKGKAREVPEAITKATAAAKRAMVRVPLKEGRTLHHDGKGRFGAGKVNVRSAPAGTGIIAGGPMRAVFESLGVSDVVTKSVGTSNPYNMIRATFDALTDQTSPKSVAQRRGKKVADLLGRGGASQVEAEAAAEAIAE</sequence>
<accession>Q2G8W3</accession>
<organism>
    <name type="scientific">Novosphingobium aromaticivorans (strain ATCC 700278 / DSM 12444 / CCUG 56034 / CIP 105152 / NBRC 16084 / F199)</name>
    <dbReference type="NCBI Taxonomy" id="279238"/>
    <lineage>
        <taxon>Bacteria</taxon>
        <taxon>Pseudomonadati</taxon>
        <taxon>Pseudomonadota</taxon>
        <taxon>Alphaproteobacteria</taxon>
        <taxon>Sphingomonadales</taxon>
        <taxon>Sphingomonadaceae</taxon>
        <taxon>Novosphingobium</taxon>
    </lineage>
</organism>
<keyword id="KW-1185">Reference proteome</keyword>
<keyword id="KW-0687">Ribonucleoprotein</keyword>
<keyword id="KW-0689">Ribosomal protein</keyword>
<keyword id="KW-0694">RNA-binding</keyword>
<keyword id="KW-0699">rRNA-binding</keyword>
<dbReference type="EMBL" id="CP000248">
    <property type="protein sequence ID" value="ABD25710.1"/>
    <property type="molecule type" value="Genomic_DNA"/>
</dbReference>
<dbReference type="RefSeq" id="WP_011444924.1">
    <property type="nucleotide sequence ID" value="NC_007794.1"/>
</dbReference>
<dbReference type="SMR" id="Q2G8W3"/>
<dbReference type="STRING" id="279238.Saro_1266"/>
<dbReference type="KEGG" id="nar:Saro_1266"/>
<dbReference type="eggNOG" id="COG0098">
    <property type="taxonomic scope" value="Bacteria"/>
</dbReference>
<dbReference type="HOGENOM" id="CLU_065898_2_1_5"/>
<dbReference type="Proteomes" id="UP000009134">
    <property type="component" value="Chromosome"/>
</dbReference>
<dbReference type="GO" id="GO:0015935">
    <property type="term" value="C:small ribosomal subunit"/>
    <property type="evidence" value="ECO:0007669"/>
    <property type="project" value="InterPro"/>
</dbReference>
<dbReference type="GO" id="GO:0019843">
    <property type="term" value="F:rRNA binding"/>
    <property type="evidence" value="ECO:0007669"/>
    <property type="project" value="UniProtKB-UniRule"/>
</dbReference>
<dbReference type="GO" id="GO:0003735">
    <property type="term" value="F:structural constituent of ribosome"/>
    <property type="evidence" value="ECO:0007669"/>
    <property type="project" value="InterPro"/>
</dbReference>
<dbReference type="GO" id="GO:0006412">
    <property type="term" value="P:translation"/>
    <property type="evidence" value="ECO:0007669"/>
    <property type="project" value="UniProtKB-UniRule"/>
</dbReference>
<dbReference type="FunFam" id="3.30.160.20:FF:000001">
    <property type="entry name" value="30S ribosomal protein S5"/>
    <property type="match status" value="1"/>
</dbReference>
<dbReference type="FunFam" id="3.30.230.10:FF:000002">
    <property type="entry name" value="30S ribosomal protein S5"/>
    <property type="match status" value="1"/>
</dbReference>
<dbReference type="Gene3D" id="3.30.160.20">
    <property type="match status" value="1"/>
</dbReference>
<dbReference type="Gene3D" id="3.30.230.10">
    <property type="match status" value="1"/>
</dbReference>
<dbReference type="HAMAP" id="MF_01307_B">
    <property type="entry name" value="Ribosomal_uS5_B"/>
    <property type="match status" value="1"/>
</dbReference>
<dbReference type="InterPro" id="IPR020568">
    <property type="entry name" value="Ribosomal_Su5_D2-typ_SF"/>
</dbReference>
<dbReference type="InterPro" id="IPR000851">
    <property type="entry name" value="Ribosomal_uS5"/>
</dbReference>
<dbReference type="InterPro" id="IPR005712">
    <property type="entry name" value="Ribosomal_uS5_bac-type"/>
</dbReference>
<dbReference type="InterPro" id="IPR005324">
    <property type="entry name" value="Ribosomal_uS5_C"/>
</dbReference>
<dbReference type="InterPro" id="IPR013810">
    <property type="entry name" value="Ribosomal_uS5_N"/>
</dbReference>
<dbReference type="InterPro" id="IPR018192">
    <property type="entry name" value="Ribosomal_uS5_N_CS"/>
</dbReference>
<dbReference type="InterPro" id="IPR014721">
    <property type="entry name" value="Ribsml_uS5_D2-typ_fold_subgr"/>
</dbReference>
<dbReference type="NCBIfam" id="TIGR01021">
    <property type="entry name" value="rpsE_bact"/>
    <property type="match status" value="1"/>
</dbReference>
<dbReference type="PANTHER" id="PTHR48277">
    <property type="entry name" value="MITOCHONDRIAL RIBOSOMAL PROTEIN S5"/>
    <property type="match status" value="1"/>
</dbReference>
<dbReference type="PANTHER" id="PTHR48277:SF1">
    <property type="entry name" value="MITOCHONDRIAL RIBOSOMAL PROTEIN S5"/>
    <property type="match status" value="1"/>
</dbReference>
<dbReference type="Pfam" id="PF00333">
    <property type="entry name" value="Ribosomal_S5"/>
    <property type="match status" value="1"/>
</dbReference>
<dbReference type="Pfam" id="PF03719">
    <property type="entry name" value="Ribosomal_S5_C"/>
    <property type="match status" value="1"/>
</dbReference>
<dbReference type="SUPFAM" id="SSF54768">
    <property type="entry name" value="dsRNA-binding domain-like"/>
    <property type="match status" value="1"/>
</dbReference>
<dbReference type="SUPFAM" id="SSF54211">
    <property type="entry name" value="Ribosomal protein S5 domain 2-like"/>
    <property type="match status" value="1"/>
</dbReference>
<dbReference type="PROSITE" id="PS00585">
    <property type="entry name" value="RIBOSOMAL_S5"/>
    <property type="match status" value="1"/>
</dbReference>
<dbReference type="PROSITE" id="PS50881">
    <property type="entry name" value="S5_DSRBD"/>
    <property type="match status" value="1"/>
</dbReference>
<proteinExistence type="inferred from homology"/>
<feature type="chain" id="PRO_1000086032" description="Small ribosomal subunit protein uS5">
    <location>
        <begin position="1"/>
        <end position="237"/>
    </location>
</feature>
<feature type="domain" description="S5 DRBM" evidence="1">
    <location>
        <begin position="63"/>
        <end position="126"/>
    </location>
</feature>
<feature type="region of interest" description="Disordered" evidence="2">
    <location>
        <begin position="1"/>
        <end position="59"/>
    </location>
</feature>
<feature type="compositionally biased region" description="Basic and acidic residues" evidence="2">
    <location>
        <begin position="20"/>
        <end position="55"/>
    </location>
</feature>
<evidence type="ECO:0000255" key="1">
    <source>
        <dbReference type="HAMAP-Rule" id="MF_01307"/>
    </source>
</evidence>
<evidence type="ECO:0000256" key="2">
    <source>
        <dbReference type="SAM" id="MobiDB-lite"/>
    </source>
</evidence>
<evidence type="ECO:0000305" key="3"/>
<reference key="1">
    <citation type="submission" date="2006-01" db="EMBL/GenBank/DDBJ databases">
        <title>Complete sequence of Novosphingobium aromaticivorans DSM 12444.</title>
        <authorList>
            <consortium name="US DOE Joint Genome Institute"/>
            <person name="Copeland A."/>
            <person name="Lucas S."/>
            <person name="Lapidus A."/>
            <person name="Barry K."/>
            <person name="Detter J.C."/>
            <person name="Glavina T."/>
            <person name="Hammon N."/>
            <person name="Israni S."/>
            <person name="Pitluck S."/>
            <person name="Chain P."/>
            <person name="Malfatti S."/>
            <person name="Shin M."/>
            <person name="Vergez L."/>
            <person name="Schmutz J."/>
            <person name="Larimer F."/>
            <person name="Land M."/>
            <person name="Kyrpides N."/>
            <person name="Ivanova N."/>
            <person name="Fredrickson J."/>
            <person name="Balkwill D."/>
            <person name="Romine M.F."/>
            <person name="Richardson P."/>
        </authorList>
    </citation>
    <scope>NUCLEOTIDE SEQUENCE [LARGE SCALE GENOMIC DNA]</scope>
    <source>
        <strain>ATCC 700278 / DSM 12444 / CCUG 56034 / CIP 105152 / NBRC 16084 / F199</strain>
    </source>
</reference>
<name>RS5_NOVAD</name>
<gene>
    <name evidence="1" type="primary">rpsE</name>
    <name type="ordered locus">Saro_1266</name>
</gene>